<reference key="1">
    <citation type="journal article" date="2003" name="J. Bacteriol.">
        <title>Comparative genomics of Salmonella enterica serovar Typhi strains Ty2 and CT18.</title>
        <authorList>
            <person name="Deng W."/>
            <person name="Liou S.-R."/>
            <person name="Plunkett G. III"/>
            <person name="Mayhew G.F."/>
            <person name="Rose D.J."/>
            <person name="Burland V."/>
            <person name="Kodoyianni V."/>
            <person name="Schwartz D.C."/>
            <person name="Blattner F.R."/>
        </authorList>
    </citation>
    <scope>NUCLEOTIDE SEQUENCE [LARGE SCALE GENOMIC DNA]</scope>
    <source>
        <strain>ATCC 700931 / Ty2</strain>
    </source>
</reference>
<reference key="2">
    <citation type="journal article" date="2001" name="Nature">
        <title>Complete genome sequence of a multiple drug resistant Salmonella enterica serovar Typhi CT18.</title>
        <authorList>
            <person name="Parkhill J."/>
            <person name="Dougan G."/>
            <person name="James K.D."/>
            <person name="Thomson N.R."/>
            <person name="Pickard D."/>
            <person name="Wain J."/>
            <person name="Churcher C.M."/>
            <person name="Mungall K.L."/>
            <person name="Bentley S.D."/>
            <person name="Holden M.T.G."/>
            <person name="Sebaihia M."/>
            <person name="Baker S."/>
            <person name="Basham D."/>
            <person name="Brooks K."/>
            <person name="Chillingworth T."/>
            <person name="Connerton P."/>
            <person name="Cronin A."/>
            <person name="Davis P."/>
            <person name="Davies R.M."/>
            <person name="Dowd L."/>
            <person name="White N."/>
            <person name="Farrar J."/>
            <person name="Feltwell T."/>
            <person name="Hamlin N."/>
            <person name="Haque A."/>
            <person name="Hien T.T."/>
            <person name="Holroyd S."/>
            <person name="Jagels K."/>
            <person name="Krogh A."/>
            <person name="Larsen T.S."/>
            <person name="Leather S."/>
            <person name="Moule S."/>
            <person name="O'Gaora P."/>
            <person name="Parry C."/>
            <person name="Quail M.A."/>
            <person name="Rutherford K.M."/>
            <person name="Simmonds M."/>
            <person name="Skelton J."/>
            <person name="Stevens K."/>
            <person name="Whitehead S."/>
            <person name="Barrell B.G."/>
        </authorList>
    </citation>
    <scope>NUCLEOTIDE SEQUENCE [LARGE SCALE GENOMIC DNA]</scope>
    <source>
        <strain>CT18</strain>
    </source>
</reference>
<proteinExistence type="inferred from homology"/>
<name>QUEC_SALTI</name>
<gene>
    <name evidence="1" type="primary">queC</name>
    <name type="ordered locus">STY0497</name>
    <name type="ordered locus">t2405</name>
</gene>
<keyword id="KW-0067">ATP-binding</keyword>
<keyword id="KW-0436">Ligase</keyword>
<keyword id="KW-0479">Metal-binding</keyword>
<keyword id="KW-0547">Nucleotide-binding</keyword>
<keyword id="KW-0671">Queuosine biosynthesis</keyword>
<keyword id="KW-0862">Zinc</keyword>
<feature type="chain" id="PRO_0000246919" description="7-cyano-7-deazaguanine synthase">
    <location>
        <begin position="1"/>
        <end position="231"/>
    </location>
</feature>
<feature type="binding site" evidence="1">
    <location>
        <begin position="8"/>
        <end position="18"/>
    </location>
    <ligand>
        <name>ATP</name>
        <dbReference type="ChEBI" id="CHEBI:30616"/>
    </ligand>
</feature>
<feature type="binding site" evidence="1">
    <location>
        <position position="188"/>
    </location>
    <ligand>
        <name>Zn(2+)</name>
        <dbReference type="ChEBI" id="CHEBI:29105"/>
    </ligand>
</feature>
<feature type="binding site" evidence="1">
    <location>
        <position position="197"/>
    </location>
    <ligand>
        <name>Zn(2+)</name>
        <dbReference type="ChEBI" id="CHEBI:29105"/>
    </ligand>
</feature>
<feature type="binding site" evidence="1">
    <location>
        <position position="200"/>
    </location>
    <ligand>
        <name>Zn(2+)</name>
        <dbReference type="ChEBI" id="CHEBI:29105"/>
    </ligand>
</feature>
<feature type="binding site" evidence="1">
    <location>
        <position position="203"/>
    </location>
    <ligand>
        <name>Zn(2+)</name>
        <dbReference type="ChEBI" id="CHEBI:29105"/>
    </ligand>
</feature>
<dbReference type="EC" id="6.3.4.20" evidence="1"/>
<dbReference type="EMBL" id="AL513382">
    <property type="protein sequence ID" value="CAD08914.1"/>
    <property type="molecule type" value="Genomic_DNA"/>
</dbReference>
<dbReference type="EMBL" id="AE014613">
    <property type="protein sequence ID" value="AAO69995.1"/>
    <property type="molecule type" value="Genomic_DNA"/>
</dbReference>
<dbReference type="RefSeq" id="NP_455052.1">
    <property type="nucleotide sequence ID" value="NC_003198.1"/>
</dbReference>
<dbReference type="RefSeq" id="WP_000817201.1">
    <property type="nucleotide sequence ID" value="NZ_WSUR01000026.1"/>
</dbReference>
<dbReference type="SMR" id="Q8XEU3"/>
<dbReference type="STRING" id="220341.gene:17584519"/>
<dbReference type="KEGG" id="stt:t2405"/>
<dbReference type="KEGG" id="sty:STY0497"/>
<dbReference type="PATRIC" id="fig|220341.7.peg.499"/>
<dbReference type="eggNOG" id="COG0603">
    <property type="taxonomic scope" value="Bacteria"/>
</dbReference>
<dbReference type="HOGENOM" id="CLU_081854_0_0_6"/>
<dbReference type="OMA" id="VWVPNRN"/>
<dbReference type="OrthoDB" id="9789567at2"/>
<dbReference type="UniPathway" id="UPA00391"/>
<dbReference type="Proteomes" id="UP000000541">
    <property type="component" value="Chromosome"/>
</dbReference>
<dbReference type="Proteomes" id="UP000002670">
    <property type="component" value="Chromosome"/>
</dbReference>
<dbReference type="GO" id="GO:0005524">
    <property type="term" value="F:ATP binding"/>
    <property type="evidence" value="ECO:0007669"/>
    <property type="project" value="UniProtKB-UniRule"/>
</dbReference>
<dbReference type="GO" id="GO:0016879">
    <property type="term" value="F:ligase activity, forming carbon-nitrogen bonds"/>
    <property type="evidence" value="ECO:0007669"/>
    <property type="project" value="UniProtKB-UniRule"/>
</dbReference>
<dbReference type="GO" id="GO:0008270">
    <property type="term" value="F:zinc ion binding"/>
    <property type="evidence" value="ECO:0007669"/>
    <property type="project" value="UniProtKB-UniRule"/>
</dbReference>
<dbReference type="GO" id="GO:0008616">
    <property type="term" value="P:queuosine biosynthetic process"/>
    <property type="evidence" value="ECO:0007669"/>
    <property type="project" value="UniProtKB-UniRule"/>
</dbReference>
<dbReference type="CDD" id="cd01995">
    <property type="entry name" value="QueC-like"/>
    <property type="match status" value="1"/>
</dbReference>
<dbReference type="FunFam" id="3.40.50.620:FF:000017">
    <property type="entry name" value="7-cyano-7-deazaguanine synthase"/>
    <property type="match status" value="1"/>
</dbReference>
<dbReference type="Gene3D" id="3.40.50.620">
    <property type="entry name" value="HUPs"/>
    <property type="match status" value="1"/>
</dbReference>
<dbReference type="HAMAP" id="MF_01633">
    <property type="entry name" value="QueC"/>
    <property type="match status" value="1"/>
</dbReference>
<dbReference type="InterPro" id="IPR018317">
    <property type="entry name" value="QueC"/>
</dbReference>
<dbReference type="InterPro" id="IPR014729">
    <property type="entry name" value="Rossmann-like_a/b/a_fold"/>
</dbReference>
<dbReference type="NCBIfam" id="TIGR00364">
    <property type="entry name" value="7-cyano-7-deazaguanine synthase QueC"/>
    <property type="match status" value="1"/>
</dbReference>
<dbReference type="NCBIfam" id="NF008317">
    <property type="entry name" value="PRK11106.1"/>
    <property type="match status" value="1"/>
</dbReference>
<dbReference type="PANTHER" id="PTHR42914">
    <property type="entry name" value="7-CYANO-7-DEAZAGUANINE SYNTHASE"/>
    <property type="match status" value="1"/>
</dbReference>
<dbReference type="PANTHER" id="PTHR42914:SF1">
    <property type="entry name" value="7-CYANO-7-DEAZAGUANINE SYNTHASE"/>
    <property type="match status" value="1"/>
</dbReference>
<dbReference type="Pfam" id="PF06508">
    <property type="entry name" value="QueC"/>
    <property type="match status" value="1"/>
</dbReference>
<dbReference type="PIRSF" id="PIRSF006293">
    <property type="entry name" value="ExsB"/>
    <property type="match status" value="1"/>
</dbReference>
<dbReference type="SUPFAM" id="SSF52402">
    <property type="entry name" value="Adenine nucleotide alpha hydrolases-like"/>
    <property type="match status" value="1"/>
</dbReference>
<comment type="function">
    <text evidence="1">Catalyzes the ATP-dependent conversion of 7-carboxy-7-deazaguanine (CDG) to 7-cyano-7-deazaguanine (preQ(0)).</text>
</comment>
<comment type="catalytic activity">
    <reaction evidence="1">
        <text>7-carboxy-7-deazaguanine + NH4(+) + ATP = 7-cyano-7-deazaguanine + ADP + phosphate + H2O + H(+)</text>
        <dbReference type="Rhea" id="RHEA:27982"/>
        <dbReference type="ChEBI" id="CHEBI:15377"/>
        <dbReference type="ChEBI" id="CHEBI:15378"/>
        <dbReference type="ChEBI" id="CHEBI:28938"/>
        <dbReference type="ChEBI" id="CHEBI:30616"/>
        <dbReference type="ChEBI" id="CHEBI:43474"/>
        <dbReference type="ChEBI" id="CHEBI:45075"/>
        <dbReference type="ChEBI" id="CHEBI:61036"/>
        <dbReference type="ChEBI" id="CHEBI:456216"/>
        <dbReference type="EC" id="6.3.4.20"/>
    </reaction>
</comment>
<comment type="cofactor">
    <cofactor evidence="1">
        <name>Zn(2+)</name>
        <dbReference type="ChEBI" id="CHEBI:29105"/>
    </cofactor>
    <text evidence="1">Binds 1 zinc ion per subunit.</text>
</comment>
<comment type="pathway">
    <text evidence="1">Purine metabolism; 7-cyano-7-deazaguanine biosynthesis.</text>
</comment>
<comment type="similarity">
    <text evidence="1">Belongs to the QueC family.</text>
</comment>
<accession>Q8XEU3</accession>
<accession>Q7ANG0</accession>
<protein>
    <recommendedName>
        <fullName evidence="1">7-cyano-7-deazaguanine synthase</fullName>
        <ecNumber evidence="1">6.3.4.20</ecNumber>
    </recommendedName>
    <alternativeName>
        <fullName evidence="1">7-cyano-7-carbaguanine synthase</fullName>
    </alternativeName>
    <alternativeName>
        <fullName evidence="1">PreQ(0) synthase</fullName>
    </alternativeName>
    <alternativeName>
        <fullName evidence="1">Queuosine biosynthesis protein QueC</fullName>
    </alternativeName>
</protein>
<organism>
    <name type="scientific">Salmonella typhi</name>
    <dbReference type="NCBI Taxonomy" id="90370"/>
    <lineage>
        <taxon>Bacteria</taxon>
        <taxon>Pseudomonadati</taxon>
        <taxon>Pseudomonadota</taxon>
        <taxon>Gammaproteobacteria</taxon>
        <taxon>Enterobacterales</taxon>
        <taxon>Enterobacteriaceae</taxon>
        <taxon>Salmonella</taxon>
    </lineage>
</organism>
<evidence type="ECO:0000255" key="1">
    <source>
        <dbReference type="HAMAP-Rule" id="MF_01633"/>
    </source>
</evidence>
<sequence length="231" mass="25455">MKRAVVVFSGGQDSTTCLAQARHQYDEVHCVTFDYGQRHRAEIDVARALALKLGARAHKVLDVTLLNELAVSSLTRDSIPVPDYEPNADGIPNTFVPGRNILFLTLAAIYAYQVKAEAVITGVCETDFSGYPDCRDEFVKALNHAVNLGMAKDIRFETPLMWIDKAETWALADYWGQLDLVREETLTCYNGIKGDGCGHCAACNLRANGLNHYLSNKAAVMAAMKQKTGLR</sequence>